<protein>
    <recommendedName>
        <fullName evidence="1">Ubiquinone/menaquinone biosynthesis C-methyltransferase UbiE</fullName>
        <ecNumber evidence="1">2.1.1.163</ecNumber>
        <ecNumber evidence="1">2.1.1.201</ecNumber>
    </recommendedName>
    <alternativeName>
        <fullName evidence="1">2-methoxy-6-polyprenyl-1,4-benzoquinol methylase</fullName>
    </alternativeName>
    <alternativeName>
        <fullName evidence="1">Demethylmenaquinone methyltransferase</fullName>
    </alternativeName>
</protein>
<dbReference type="EC" id="2.1.1.163" evidence="1"/>
<dbReference type="EC" id="2.1.1.201" evidence="1"/>
<dbReference type="EMBL" id="AE004969">
    <property type="protein sequence ID" value="AAW89068.1"/>
    <property type="molecule type" value="Genomic_DNA"/>
</dbReference>
<dbReference type="RefSeq" id="WP_003687710.1">
    <property type="nucleotide sequence ID" value="NC_002946.2"/>
</dbReference>
<dbReference type="RefSeq" id="YP_207480.1">
    <property type="nucleotide sequence ID" value="NC_002946.2"/>
</dbReference>
<dbReference type="SMR" id="Q5F9R9"/>
<dbReference type="STRING" id="242231.NGO_0321"/>
<dbReference type="GeneID" id="66752661"/>
<dbReference type="KEGG" id="ngo:NGO_0321"/>
<dbReference type="PATRIC" id="fig|242231.10.peg.392"/>
<dbReference type="HOGENOM" id="CLU_037990_0_0_4"/>
<dbReference type="UniPathway" id="UPA00079">
    <property type="reaction ID" value="UER00169"/>
</dbReference>
<dbReference type="UniPathway" id="UPA00232"/>
<dbReference type="Proteomes" id="UP000000535">
    <property type="component" value="Chromosome"/>
</dbReference>
<dbReference type="GO" id="GO:0008425">
    <property type="term" value="F:2-methoxy-6-polyprenyl-1,4-benzoquinol methyltransferase activity"/>
    <property type="evidence" value="ECO:0007669"/>
    <property type="project" value="UniProtKB-UniRule"/>
</dbReference>
<dbReference type="GO" id="GO:0043770">
    <property type="term" value="F:demethylmenaquinone methyltransferase activity"/>
    <property type="evidence" value="ECO:0007669"/>
    <property type="project" value="UniProtKB-UniRule"/>
</dbReference>
<dbReference type="GO" id="GO:0009060">
    <property type="term" value="P:aerobic respiration"/>
    <property type="evidence" value="ECO:0007669"/>
    <property type="project" value="UniProtKB-UniRule"/>
</dbReference>
<dbReference type="GO" id="GO:0009234">
    <property type="term" value="P:menaquinone biosynthetic process"/>
    <property type="evidence" value="ECO:0007669"/>
    <property type="project" value="UniProtKB-UniRule"/>
</dbReference>
<dbReference type="GO" id="GO:0032259">
    <property type="term" value="P:methylation"/>
    <property type="evidence" value="ECO:0007669"/>
    <property type="project" value="UniProtKB-KW"/>
</dbReference>
<dbReference type="CDD" id="cd02440">
    <property type="entry name" value="AdoMet_MTases"/>
    <property type="match status" value="1"/>
</dbReference>
<dbReference type="Gene3D" id="3.40.50.150">
    <property type="entry name" value="Vaccinia Virus protein VP39"/>
    <property type="match status" value="1"/>
</dbReference>
<dbReference type="HAMAP" id="MF_01813">
    <property type="entry name" value="MenG_UbiE_methyltr"/>
    <property type="match status" value="1"/>
</dbReference>
<dbReference type="InterPro" id="IPR029063">
    <property type="entry name" value="SAM-dependent_MTases_sf"/>
</dbReference>
<dbReference type="InterPro" id="IPR004033">
    <property type="entry name" value="UbiE/COQ5_MeTrFase"/>
</dbReference>
<dbReference type="InterPro" id="IPR023576">
    <property type="entry name" value="UbiE/COQ5_MeTrFase_CS"/>
</dbReference>
<dbReference type="NCBIfam" id="TIGR01934">
    <property type="entry name" value="MenG_MenH_UbiE"/>
    <property type="match status" value="1"/>
</dbReference>
<dbReference type="NCBIfam" id="NF001240">
    <property type="entry name" value="PRK00216.1-1"/>
    <property type="match status" value="1"/>
</dbReference>
<dbReference type="NCBIfam" id="NF001244">
    <property type="entry name" value="PRK00216.1-5"/>
    <property type="match status" value="1"/>
</dbReference>
<dbReference type="PANTHER" id="PTHR43591:SF24">
    <property type="entry name" value="2-METHOXY-6-POLYPRENYL-1,4-BENZOQUINOL METHYLASE, MITOCHONDRIAL"/>
    <property type="match status" value="1"/>
</dbReference>
<dbReference type="PANTHER" id="PTHR43591">
    <property type="entry name" value="METHYLTRANSFERASE"/>
    <property type="match status" value="1"/>
</dbReference>
<dbReference type="Pfam" id="PF01209">
    <property type="entry name" value="Ubie_methyltran"/>
    <property type="match status" value="1"/>
</dbReference>
<dbReference type="SUPFAM" id="SSF53335">
    <property type="entry name" value="S-adenosyl-L-methionine-dependent methyltransferases"/>
    <property type="match status" value="1"/>
</dbReference>
<dbReference type="PROSITE" id="PS51608">
    <property type="entry name" value="SAM_MT_UBIE"/>
    <property type="match status" value="1"/>
</dbReference>
<dbReference type="PROSITE" id="PS01183">
    <property type="entry name" value="UBIE_1"/>
    <property type="match status" value="1"/>
</dbReference>
<dbReference type="PROSITE" id="PS01184">
    <property type="entry name" value="UBIE_2"/>
    <property type="match status" value="1"/>
</dbReference>
<name>UBIE_NEIG1</name>
<reference key="1">
    <citation type="submission" date="2003-03" db="EMBL/GenBank/DDBJ databases">
        <title>The complete genome sequence of Neisseria gonorrhoeae.</title>
        <authorList>
            <person name="Lewis L.A."/>
            <person name="Gillaspy A.F."/>
            <person name="McLaughlin R.E."/>
            <person name="Gipson M."/>
            <person name="Ducey T.F."/>
            <person name="Ownbey T."/>
            <person name="Hartman K."/>
            <person name="Nydick C."/>
            <person name="Carson M.B."/>
            <person name="Vaughn J."/>
            <person name="Thomson C."/>
            <person name="Song L."/>
            <person name="Lin S."/>
            <person name="Yuan X."/>
            <person name="Najar F."/>
            <person name="Zhan M."/>
            <person name="Ren Q."/>
            <person name="Zhu H."/>
            <person name="Qi S."/>
            <person name="Kenton S.M."/>
            <person name="Lai H."/>
            <person name="White J.D."/>
            <person name="Clifton S."/>
            <person name="Roe B.A."/>
            <person name="Dyer D.W."/>
        </authorList>
    </citation>
    <scope>NUCLEOTIDE SEQUENCE [LARGE SCALE GENOMIC DNA]</scope>
    <source>
        <strain>ATCC 700825 / FA 1090</strain>
    </source>
</reference>
<organism>
    <name type="scientific">Neisseria gonorrhoeae (strain ATCC 700825 / FA 1090)</name>
    <dbReference type="NCBI Taxonomy" id="242231"/>
    <lineage>
        <taxon>Bacteria</taxon>
        <taxon>Pseudomonadati</taxon>
        <taxon>Pseudomonadota</taxon>
        <taxon>Betaproteobacteria</taxon>
        <taxon>Neisseriales</taxon>
        <taxon>Neisseriaceae</taxon>
        <taxon>Neisseria</taxon>
    </lineage>
</organism>
<evidence type="ECO:0000255" key="1">
    <source>
        <dbReference type="HAMAP-Rule" id="MF_01813"/>
    </source>
</evidence>
<keyword id="KW-0474">Menaquinone biosynthesis</keyword>
<keyword id="KW-0489">Methyltransferase</keyword>
<keyword id="KW-1185">Reference proteome</keyword>
<keyword id="KW-0949">S-adenosyl-L-methionine</keyword>
<keyword id="KW-0808">Transferase</keyword>
<keyword id="KW-0831">Ubiquinone biosynthesis</keyword>
<feature type="chain" id="PRO_1000056265" description="Ubiquinone/menaquinone biosynthesis C-methyltransferase UbiE">
    <location>
        <begin position="1"/>
        <end position="245"/>
    </location>
</feature>
<feature type="binding site" evidence="1">
    <location>
        <position position="71"/>
    </location>
    <ligand>
        <name>S-adenosyl-L-methionine</name>
        <dbReference type="ChEBI" id="CHEBI:59789"/>
    </ligand>
</feature>
<feature type="binding site" evidence="1">
    <location>
        <position position="92"/>
    </location>
    <ligand>
        <name>S-adenosyl-L-methionine</name>
        <dbReference type="ChEBI" id="CHEBI:59789"/>
    </ligand>
</feature>
<feature type="binding site" evidence="1">
    <location>
        <begin position="118"/>
        <end position="119"/>
    </location>
    <ligand>
        <name>S-adenosyl-L-methionine</name>
        <dbReference type="ChEBI" id="CHEBI:59789"/>
    </ligand>
</feature>
<proteinExistence type="inferred from homology"/>
<accession>Q5F9R9</accession>
<gene>
    <name evidence="1" type="primary">ubiE</name>
    <name type="ordered locus">NGO_0321</name>
</gene>
<sequence>MGGQKTHFGFSTVNEDEKAGKVAEVFHSVAKNYDIMNDVMSAGLHRVWKHFTIHTAHLKKGDKVLDIAGGTGDLSRGWAKRVGKEGEVWLTDINSSMLTVGRDRLLNEGMILPVSLADAEKLPFPDNYFNLVSVAFGLRNMTYKDAALKEMYRVLKPGGTLLVLEFSKIYKPLEGAYDFYSFKLLPVMGRLIAKDADSYQYLAESIRMHPDQETLKQMMLDAGFDSVDYHNMSAGIVALHKGVKF</sequence>
<comment type="function">
    <text evidence="1">Methyltransferase required for the conversion of demethylmenaquinol (DMKH2) to menaquinol (MKH2) and the conversion of 2-polyprenyl-6-methoxy-1,4-benzoquinol (DDMQH2) to 2-polyprenyl-3-methyl-6-methoxy-1,4-benzoquinol (DMQH2).</text>
</comment>
<comment type="catalytic activity">
    <reaction evidence="1">
        <text>a 2-demethylmenaquinol + S-adenosyl-L-methionine = a menaquinol + S-adenosyl-L-homocysteine + H(+)</text>
        <dbReference type="Rhea" id="RHEA:42640"/>
        <dbReference type="Rhea" id="RHEA-COMP:9539"/>
        <dbReference type="Rhea" id="RHEA-COMP:9563"/>
        <dbReference type="ChEBI" id="CHEBI:15378"/>
        <dbReference type="ChEBI" id="CHEBI:18151"/>
        <dbReference type="ChEBI" id="CHEBI:55437"/>
        <dbReference type="ChEBI" id="CHEBI:57856"/>
        <dbReference type="ChEBI" id="CHEBI:59789"/>
        <dbReference type="EC" id="2.1.1.163"/>
    </reaction>
</comment>
<comment type="catalytic activity">
    <reaction evidence="1">
        <text>a 2-methoxy-6-(all-trans-polyprenyl)benzene-1,4-diol + S-adenosyl-L-methionine = a 5-methoxy-2-methyl-3-(all-trans-polyprenyl)benzene-1,4-diol + S-adenosyl-L-homocysteine + H(+)</text>
        <dbReference type="Rhea" id="RHEA:28286"/>
        <dbReference type="Rhea" id="RHEA-COMP:10858"/>
        <dbReference type="Rhea" id="RHEA-COMP:10859"/>
        <dbReference type="ChEBI" id="CHEBI:15378"/>
        <dbReference type="ChEBI" id="CHEBI:57856"/>
        <dbReference type="ChEBI" id="CHEBI:59789"/>
        <dbReference type="ChEBI" id="CHEBI:84166"/>
        <dbReference type="ChEBI" id="CHEBI:84167"/>
        <dbReference type="EC" id="2.1.1.201"/>
    </reaction>
</comment>
<comment type="pathway">
    <text evidence="1">Quinol/quinone metabolism; menaquinone biosynthesis; menaquinol from 1,4-dihydroxy-2-naphthoate: step 2/2.</text>
</comment>
<comment type="pathway">
    <text evidence="1">Cofactor biosynthesis; ubiquinone biosynthesis.</text>
</comment>
<comment type="similarity">
    <text evidence="1">Belongs to the class I-like SAM-binding methyltransferase superfamily. MenG/UbiE family.</text>
</comment>